<organism>
    <name type="scientific">Corynebacterium nephridii</name>
    <dbReference type="NCBI Taxonomy" id="1722"/>
    <lineage>
        <taxon>Bacteria</taxon>
        <taxon>Bacillati</taxon>
        <taxon>Actinomycetota</taxon>
        <taxon>Actinomycetes</taxon>
        <taxon>Mycobacteriales</taxon>
        <taxon>Corynebacteriaceae</taxon>
        <taxon>Corynebacterium</taxon>
    </lineage>
</organism>
<feature type="chain" id="PRO_0000120095" description="Thioredoxin C-3">
    <location>
        <begin position="1"/>
        <end position="145"/>
    </location>
</feature>
<feature type="domain" description="Thioredoxin" evidence="1">
    <location>
        <begin position="29"/>
        <end position="140"/>
    </location>
</feature>
<feature type="binding site" description="covalent">
    <location>
        <position position="25"/>
    </location>
    <ligand>
        <name>heme</name>
        <dbReference type="ChEBI" id="CHEBI:30413"/>
    </ligand>
</feature>
<feature type="binding site" description="covalent">
    <location>
        <position position="28"/>
    </location>
    <ligand>
        <name>heme</name>
        <dbReference type="ChEBI" id="CHEBI:30413"/>
    </ligand>
</feature>
<feature type="binding site" description="axial binding residue">
    <location>
        <position position="29"/>
    </location>
    <ligand>
        <name>heme</name>
        <dbReference type="ChEBI" id="CHEBI:30413"/>
    </ligand>
    <ligandPart>
        <name>Fe</name>
        <dbReference type="ChEBI" id="CHEBI:18248"/>
    </ligandPart>
</feature>
<feature type="disulfide bond" description="Redox-active" evidence="1">
    <location>
        <begin position="65"/>
        <end position="68"/>
    </location>
</feature>
<sequence>MIIVCASCGAKNRVPEEKLAVHPNCGQCHQALLPLEPIELNEQNFSNFISNSDLPVLIDLWAEWCGPCKMMAPHFAQVAKQNPYVVFAKIDTEANPRLSAAFNVRSIPTLVLMNKTTEVARISGALRTLELQQWLDQQLQQQQGN</sequence>
<keyword id="KW-1015">Disulfide bond</keyword>
<keyword id="KW-0249">Electron transport</keyword>
<keyword id="KW-0349">Heme</keyword>
<keyword id="KW-0408">Iron</keyword>
<keyword id="KW-0479">Metal-binding</keyword>
<keyword id="KW-0676">Redox-active center</keyword>
<keyword id="KW-0813">Transport</keyword>
<evidence type="ECO:0000255" key="1">
    <source>
        <dbReference type="PROSITE-ProRule" id="PRU00691"/>
    </source>
</evidence>
<evidence type="ECO:0000305" key="2"/>
<dbReference type="EMBL" id="U43655">
    <property type="protein sequence ID" value="AAB06490.1"/>
    <property type="molecule type" value="Genomic_DNA"/>
</dbReference>
<dbReference type="SMR" id="P52228"/>
<dbReference type="GO" id="GO:0005829">
    <property type="term" value="C:cytosol"/>
    <property type="evidence" value="ECO:0007669"/>
    <property type="project" value="TreeGrafter"/>
</dbReference>
<dbReference type="GO" id="GO:0046872">
    <property type="term" value="F:metal ion binding"/>
    <property type="evidence" value="ECO:0007669"/>
    <property type="project" value="UniProtKB-KW"/>
</dbReference>
<dbReference type="GO" id="GO:0015035">
    <property type="term" value="F:protein-disulfide reductase activity"/>
    <property type="evidence" value="ECO:0007669"/>
    <property type="project" value="InterPro"/>
</dbReference>
<dbReference type="CDD" id="cd02947">
    <property type="entry name" value="TRX_family"/>
    <property type="match status" value="1"/>
</dbReference>
<dbReference type="Gene3D" id="3.40.30.10">
    <property type="entry name" value="Glutaredoxin"/>
    <property type="match status" value="1"/>
</dbReference>
<dbReference type="Gene3D" id="2.30.30.380">
    <property type="entry name" value="Zn-finger domain of Sec23/24"/>
    <property type="match status" value="1"/>
</dbReference>
<dbReference type="InterPro" id="IPR049299">
    <property type="entry name" value="Thio2_N"/>
</dbReference>
<dbReference type="InterPro" id="IPR005746">
    <property type="entry name" value="Thioredoxin"/>
</dbReference>
<dbReference type="InterPro" id="IPR036249">
    <property type="entry name" value="Thioredoxin-like_sf"/>
</dbReference>
<dbReference type="InterPro" id="IPR017937">
    <property type="entry name" value="Thioredoxin_CS"/>
</dbReference>
<dbReference type="InterPro" id="IPR013766">
    <property type="entry name" value="Thioredoxin_domain"/>
</dbReference>
<dbReference type="NCBIfam" id="NF008229">
    <property type="entry name" value="PRK10996.1"/>
    <property type="match status" value="1"/>
</dbReference>
<dbReference type="NCBIfam" id="TIGR01068">
    <property type="entry name" value="thioredoxin"/>
    <property type="match status" value="1"/>
</dbReference>
<dbReference type="PANTHER" id="PTHR45663">
    <property type="entry name" value="GEO12009P1"/>
    <property type="match status" value="1"/>
</dbReference>
<dbReference type="PANTHER" id="PTHR45663:SF40">
    <property type="entry name" value="THIOREDOXIN 2"/>
    <property type="match status" value="1"/>
</dbReference>
<dbReference type="Pfam" id="PF00085">
    <property type="entry name" value="Thioredoxin"/>
    <property type="match status" value="1"/>
</dbReference>
<dbReference type="Pfam" id="PF21352">
    <property type="entry name" value="Zn_ribbon_Thio2"/>
    <property type="match status" value="1"/>
</dbReference>
<dbReference type="PRINTS" id="PR00421">
    <property type="entry name" value="THIOREDOXIN"/>
</dbReference>
<dbReference type="SUPFAM" id="SSF52833">
    <property type="entry name" value="Thioredoxin-like"/>
    <property type="match status" value="1"/>
</dbReference>
<dbReference type="PROSITE" id="PS00194">
    <property type="entry name" value="THIOREDOXIN_1"/>
    <property type="match status" value="1"/>
</dbReference>
<dbReference type="PROSITE" id="PS51352">
    <property type="entry name" value="THIOREDOXIN_2"/>
    <property type="match status" value="1"/>
</dbReference>
<reference key="1">
    <citation type="journal article" date="1996" name="Biochim. Biophys. Acta">
        <title>Identification of a third thioredoxin gene from Corynebacterium nephridii.</title>
        <authorList>
            <person name="Lim C.-J."/>
            <person name="Sa J."/>
            <person name="Fuchs J.A."/>
        </authorList>
    </citation>
    <scope>NUCLEOTIDE SEQUENCE [GENOMIC DNA]</scope>
</reference>
<accession>P52228</accession>
<proteinExistence type="inferred from homology"/>
<protein>
    <recommendedName>
        <fullName>Thioredoxin C-3</fullName>
    </recommendedName>
</protein>
<comment type="function">
    <text>Participates in various redox reactions through the reversible oxidation of its active center dithiol to a disulfide and catalyzes dithiol-disulfide exchange reactions.</text>
</comment>
<comment type="similarity">
    <text evidence="2">Belongs to the thioredoxin family.</text>
</comment>
<name>THIO3_CORNE</name>